<proteinExistence type="inferred from homology"/>
<sequence>MVTIRLARHGAKKRPFYQVVVTDSRNARNGRFIERVGFFNPIASEKEEGTRLDLDRIAHWVGQGATISDRVAALIKEVKKAA</sequence>
<name>RS16_SALCH</name>
<gene>
    <name evidence="1" type="primary">rpsP</name>
    <name type="ordered locus">SCH_2677</name>
</gene>
<keyword id="KW-0687">Ribonucleoprotein</keyword>
<keyword id="KW-0689">Ribosomal protein</keyword>
<feature type="chain" id="PRO_0000243867" description="Small ribosomal subunit protein bS16">
    <location>
        <begin position="1"/>
        <end position="82"/>
    </location>
</feature>
<protein>
    <recommendedName>
        <fullName evidence="1">Small ribosomal subunit protein bS16</fullName>
    </recommendedName>
    <alternativeName>
        <fullName evidence="2">30S ribosomal protein S16</fullName>
    </alternativeName>
</protein>
<accession>Q57L29</accession>
<reference key="1">
    <citation type="journal article" date="2005" name="Nucleic Acids Res.">
        <title>The genome sequence of Salmonella enterica serovar Choleraesuis, a highly invasive and resistant zoonotic pathogen.</title>
        <authorList>
            <person name="Chiu C.-H."/>
            <person name="Tang P."/>
            <person name="Chu C."/>
            <person name="Hu S."/>
            <person name="Bao Q."/>
            <person name="Yu J."/>
            <person name="Chou Y.-Y."/>
            <person name="Wang H.-S."/>
            <person name="Lee Y.-S."/>
        </authorList>
    </citation>
    <scope>NUCLEOTIDE SEQUENCE [LARGE SCALE GENOMIC DNA]</scope>
    <source>
        <strain>SC-B67</strain>
    </source>
</reference>
<evidence type="ECO:0000255" key="1">
    <source>
        <dbReference type="HAMAP-Rule" id="MF_00385"/>
    </source>
</evidence>
<evidence type="ECO:0000305" key="2"/>
<organism>
    <name type="scientific">Salmonella choleraesuis (strain SC-B67)</name>
    <dbReference type="NCBI Taxonomy" id="321314"/>
    <lineage>
        <taxon>Bacteria</taxon>
        <taxon>Pseudomonadati</taxon>
        <taxon>Pseudomonadota</taxon>
        <taxon>Gammaproteobacteria</taxon>
        <taxon>Enterobacterales</taxon>
        <taxon>Enterobacteriaceae</taxon>
        <taxon>Salmonella</taxon>
    </lineage>
</organism>
<dbReference type="EMBL" id="AE017220">
    <property type="protein sequence ID" value="AAX66583.1"/>
    <property type="status" value="ALT_INIT"/>
    <property type="molecule type" value="Genomic_DNA"/>
</dbReference>
<dbReference type="RefSeq" id="WP_000256453.1">
    <property type="nucleotide sequence ID" value="NC_006905.1"/>
</dbReference>
<dbReference type="SMR" id="Q57L29"/>
<dbReference type="KEGG" id="sec:SCH_2677"/>
<dbReference type="HOGENOM" id="CLU_100590_5_1_6"/>
<dbReference type="Proteomes" id="UP000000538">
    <property type="component" value="Chromosome"/>
</dbReference>
<dbReference type="GO" id="GO:0005737">
    <property type="term" value="C:cytoplasm"/>
    <property type="evidence" value="ECO:0007669"/>
    <property type="project" value="UniProtKB-ARBA"/>
</dbReference>
<dbReference type="GO" id="GO:0015935">
    <property type="term" value="C:small ribosomal subunit"/>
    <property type="evidence" value="ECO:0007669"/>
    <property type="project" value="TreeGrafter"/>
</dbReference>
<dbReference type="GO" id="GO:0003735">
    <property type="term" value="F:structural constituent of ribosome"/>
    <property type="evidence" value="ECO:0007669"/>
    <property type="project" value="InterPro"/>
</dbReference>
<dbReference type="GO" id="GO:0006412">
    <property type="term" value="P:translation"/>
    <property type="evidence" value="ECO:0007669"/>
    <property type="project" value="UniProtKB-UniRule"/>
</dbReference>
<dbReference type="FunFam" id="3.30.1320.10:FF:000001">
    <property type="entry name" value="30S ribosomal protein S16"/>
    <property type="match status" value="1"/>
</dbReference>
<dbReference type="Gene3D" id="3.30.1320.10">
    <property type="match status" value="1"/>
</dbReference>
<dbReference type="HAMAP" id="MF_00385">
    <property type="entry name" value="Ribosomal_bS16"/>
    <property type="match status" value="1"/>
</dbReference>
<dbReference type="InterPro" id="IPR000307">
    <property type="entry name" value="Ribosomal_bS16"/>
</dbReference>
<dbReference type="InterPro" id="IPR020592">
    <property type="entry name" value="Ribosomal_bS16_CS"/>
</dbReference>
<dbReference type="InterPro" id="IPR023803">
    <property type="entry name" value="Ribosomal_bS16_dom_sf"/>
</dbReference>
<dbReference type="NCBIfam" id="TIGR00002">
    <property type="entry name" value="S16"/>
    <property type="match status" value="1"/>
</dbReference>
<dbReference type="PANTHER" id="PTHR12919">
    <property type="entry name" value="30S RIBOSOMAL PROTEIN S16"/>
    <property type="match status" value="1"/>
</dbReference>
<dbReference type="PANTHER" id="PTHR12919:SF20">
    <property type="entry name" value="SMALL RIBOSOMAL SUBUNIT PROTEIN BS16M"/>
    <property type="match status" value="1"/>
</dbReference>
<dbReference type="Pfam" id="PF00886">
    <property type="entry name" value="Ribosomal_S16"/>
    <property type="match status" value="1"/>
</dbReference>
<dbReference type="SUPFAM" id="SSF54565">
    <property type="entry name" value="Ribosomal protein S16"/>
    <property type="match status" value="1"/>
</dbReference>
<dbReference type="PROSITE" id="PS00732">
    <property type="entry name" value="RIBOSOMAL_S16"/>
    <property type="match status" value="1"/>
</dbReference>
<comment type="similarity">
    <text evidence="1">Belongs to the bacterial ribosomal protein bS16 family.</text>
</comment>
<comment type="sequence caution" evidence="2">
    <conflict type="erroneous initiation">
        <sequence resource="EMBL-CDS" id="AAX66583"/>
    </conflict>
</comment>